<gene>
    <name evidence="1" type="primary">frdC</name>
    <name type="ordered locus">b4152</name>
    <name type="ordered locus">JW4113</name>
</gene>
<reference key="1">
    <citation type="journal article" date="1982" name="Proc. Natl. Acad. Sci. U.S.A.">
        <title>Overlap between ampC and frd operons on the Escherichia coli chromosome.</title>
        <authorList>
            <person name="Grundstroem T."/>
            <person name="Jaurin B."/>
        </authorList>
    </citation>
    <scope>NUCLEOTIDE SEQUENCE [GENOMIC DNA]</scope>
    <source>
        <strain>K12</strain>
    </source>
</reference>
<reference key="2">
    <citation type="journal article" date="1995" name="Nucleic Acids Res.">
        <title>Analysis of the Escherichia coli genome VI: DNA sequence of the region from 92.8 through 100 minutes.</title>
        <authorList>
            <person name="Burland V.D."/>
            <person name="Plunkett G. III"/>
            <person name="Sofia H.J."/>
            <person name="Daniels D.L."/>
            <person name="Blattner F.R."/>
        </authorList>
    </citation>
    <scope>NUCLEOTIDE SEQUENCE [LARGE SCALE GENOMIC DNA]</scope>
    <source>
        <strain>K12 / MG1655 / ATCC 47076</strain>
    </source>
</reference>
<reference key="3">
    <citation type="journal article" date="1997" name="Science">
        <title>The complete genome sequence of Escherichia coli K-12.</title>
        <authorList>
            <person name="Blattner F.R."/>
            <person name="Plunkett G. III"/>
            <person name="Bloch C.A."/>
            <person name="Perna N.T."/>
            <person name="Burland V."/>
            <person name="Riley M."/>
            <person name="Collado-Vides J."/>
            <person name="Glasner J.D."/>
            <person name="Rode C.K."/>
            <person name="Mayhew G.F."/>
            <person name="Gregor J."/>
            <person name="Davis N.W."/>
            <person name="Kirkpatrick H.A."/>
            <person name="Goeden M.A."/>
            <person name="Rose D.J."/>
            <person name="Mau B."/>
            <person name="Shao Y."/>
        </authorList>
    </citation>
    <scope>NUCLEOTIDE SEQUENCE [LARGE SCALE GENOMIC DNA]</scope>
    <source>
        <strain>K12 / MG1655 / ATCC 47076</strain>
    </source>
</reference>
<reference key="4">
    <citation type="journal article" date="2006" name="Mol. Syst. Biol.">
        <title>Highly accurate genome sequences of Escherichia coli K-12 strains MG1655 and W3110.</title>
        <authorList>
            <person name="Hayashi K."/>
            <person name="Morooka N."/>
            <person name="Yamamoto Y."/>
            <person name="Fujita K."/>
            <person name="Isono K."/>
            <person name="Choi S."/>
            <person name="Ohtsubo E."/>
            <person name="Baba T."/>
            <person name="Wanner B.L."/>
            <person name="Mori H."/>
            <person name="Horiuchi T."/>
        </authorList>
    </citation>
    <scope>NUCLEOTIDE SEQUENCE [LARGE SCALE GENOMIC DNA]</scope>
    <source>
        <strain>K12 / W3110 / ATCC 27325 / DSM 5911</strain>
    </source>
</reference>
<reference key="5">
    <citation type="journal article" date="2005" name="Science">
        <title>Global topology analysis of the Escherichia coli inner membrane proteome.</title>
        <authorList>
            <person name="Daley D.O."/>
            <person name="Rapp M."/>
            <person name="Granseth E."/>
            <person name="Melen K."/>
            <person name="Drew D."/>
            <person name="von Heijne G."/>
        </authorList>
    </citation>
    <scope>TOPOLOGY [LARGE SCALE ANALYSIS]</scope>
    <scope>SUBCELLULAR LOCATION</scope>
    <source>
        <strain>K12 / MG1655 / ATCC 47076</strain>
    </source>
</reference>
<reference key="6">
    <citation type="journal article" date="1999" name="Science">
        <title>Structure of the Escherichia coli fumarate reductase respiratory complex.</title>
        <authorList>
            <person name="Iverson T.M."/>
            <person name="Luna-Chavez C."/>
            <person name="Cecchini G."/>
            <person name="Rees D.C."/>
        </authorList>
    </citation>
    <scope>X-RAY CRYSTALLOGRAPHY (3.3 ANGSTROMS) IN COMPLEX WITH MENAQUINONE</scope>
    <scope>FUNCTION</scope>
    <scope>SUBUNIT</scope>
    <scope>SUBCELLULAR LOCATION</scope>
    <scope>TOPOLOGY</scope>
</reference>
<reference evidence="6 7 8" key="7">
    <citation type="journal article" date="2002" name="J. Biol. Chem.">
        <title>Crystallographic studies of the Escherichia coli quinol-fumarate reductase with inhibitors bound to the quinol-binding site.</title>
        <authorList>
            <person name="Iverson T.M."/>
            <person name="Luna-Chavez C."/>
            <person name="Croal L.R."/>
            <person name="Cecchini G."/>
            <person name="Rees D.C."/>
        </authorList>
    </citation>
    <scope>X-RAY CRYSTALLOGRAPHY (2.7 ANGSTROMS) OF 2-131 IN COMPLEX WITH MENAQUINONE AND INHIBITORS</scope>
    <scope>SUBUNIT</scope>
</reference>
<feature type="chain" id="PRO_0000196526" description="Fumarate reductase subunit C">
    <location>
        <begin position="1"/>
        <end position="131"/>
    </location>
</feature>
<feature type="topological domain" description="Cytoplasmic" evidence="2">
    <location>
        <begin position="1"/>
        <end position="21"/>
    </location>
</feature>
<feature type="transmembrane region" description="Helical" evidence="2">
    <location>
        <begin position="22"/>
        <end position="49"/>
    </location>
</feature>
<feature type="topological domain" description="Periplasmic" evidence="2">
    <location>
        <begin position="50"/>
        <end position="65"/>
    </location>
</feature>
<feature type="transmembrane region" description="Helical" evidence="2">
    <location>
        <begin position="66"/>
        <end position="90"/>
    </location>
</feature>
<feature type="topological domain" description="Cytoplasmic" evidence="2">
    <location>
        <begin position="91"/>
        <end position="104"/>
    </location>
</feature>
<feature type="transmembrane region" description="Helical" evidence="2">
    <location>
        <begin position="105"/>
        <end position="128"/>
    </location>
</feature>
<feature type="topological domain" description="Periplasmic" evidence="2 4">
    <location>
        <begin position="129"/>
        <end position="131"/>
    </location>
</feature>
<feature type="binding site" evidence="2 8">
    <location>
        <begin position="29"/>
        <end position="30"/>
    </location>
    <ligand>
        <name>a menaquinone</name>
        <dbReference type="ChEBI" id="CHEBI:16374"/>
    </ligand>
</feature>
<feature type="binding site" evidence="8">
    <location>
        <position position="87"/>
    </location>
    <ligand>
        <name>a menaquinone</name>
        <dbReference type="ChEBI" id="CHEBI:16374"/>
    </ligand>
</feature>
<feature type="helix" evidence="9">
    <location>
        <begin position="16"/>
        <end position="18"/>
    </location>
</feature>
<feature type="helix" evidence="9">
    <location>
        <begin position="21"/>
        <end position="31"/>
    </location>
</feature>
<feature type="helix" evidence="9">
    <location>
        <begin position="33"/>
        <end position="51"/>
    </location>
</feature>
<feature type="helix" evidence="9">
    <location>
        <begin position="53"/>
        <end position="64"/>
    </location>
</feature>
<feature type="helix" evidence="9">
    <location>
        <begin position="68"/>
        <end position="90"/>
    </location>
</feature>
<feature type="helix" evidence="9">
    <location>
        <begin position="91"/>
        <end position="94"/>
    </location>
</feature>
<feature type="strand" evidence="9">
    <location>
        <begin position="98"/>
        <end position="103"/>
    </location>
</feature>
<feature type="helix" evidence="9">
    <location>
        <begin position="107"/>
        <end position="129"/>
    </location>
</feature>
<name>FRDC_ECOLI</name>
<comment type="function">
    <text evidence="2 3">Two distinct, membrane-bound, FAD-containing enzymes are responsible for the catalysis of fumarate and succinate interconversion; fumarate reductase is used in anaerobic growth, and succinate dehydrogenase is used in aerobic growth. Anchors the catalytic components of the fumarate reductase complex to the cell inner membrane, binds quinones (PubMed:10373108). The QFR enzyme complex binds 2 quinones in or near the membrane; 1 near the [3Fe-4S] cluster (QP is proximal to the [3Fe-4S] cluster, on the cytoplasmic side of the membrane) while QD (the distal cluster) is on the other side of the membrane. It is not clear if both of the quinol-binding sites are functionally relevant (PubMed:10373108, PubMed:11850430).</text>
</comment>
<comment type="subunit">
    <text evidence="1 2 3">Part of an enzyme complex containing four subunits: a flavoprotein (FrdA), an iron-sulfur protein (FrdB), and two hydrophobic anchor proteins (FrdC and FrdD).</text>
</comment>
<comment type="subcellular location">
    <subcellularLocation>
        <location evidence="1 4">Cell inner membrane</location>
        <topology evidence="1 2">Multi-pass membrane protein</topology>
    </subcellularLocation>
</comment>
<comment type="similarity">
    <text evidence="1">Belongs to the FrdC family.</text>
</comment>
<sequence>MTTKRKPYVRPMTSTWWKKLPFYRFYMLREGTAVPAVWFSIELIFGLFALKNGPEAWAGFVDFLQNPVIVIINLITLAAALLHTKTWFELAPKAANIIVKDEKMGPEPIIKSLWAVTVVATIVILFVALYW</sequence>
<protein>
    <recommendedName>
        <fullName evidence="1">Fumarate reductase subunit C</fullName>
    </recommendedName>
    <alternativeName>
        <fullName evidence="1">Fumarate reductase 15 kDa hydrophobic protein</fullName>
    </alternativeName>
    <alternativeName>
        <fullName evidence="1 5">Quinol-fumarate reductase subunit C</fullName>
        <shortName evidence="1 5">QFR subunit C</shortName>
    </alternativeName>
</protein>
<evidence type="ECO:0000255" key="1">
    <source>
        <dbReference type="HAMAP-Rule" id="MF_00708"/>
    </source>
</evidence>
<evidence type="ECO:0000269" key="2">
    <source>
    </source>
</evidence>
<evidence type="ECO:0000269" key="3">
    <source>
    </source>
</evidence>
<evidence type="ECO:0000269" key="4">
    <source>
    </source>
</evidence>
<evidence type="ECO:0000303" key="5">
    <source>
    </source>
</evidence>
<evidence type="ECO:0007744" key="6">
    <source>
        <dbReference type="PDB" id="1KF6"/>
    </source>
</evidence>
<evidence type="ECO:0007744" key="7">
    <source>
        <dbReference type="PDB" id="1KFY"/>
    </source>
</evidence>
<evidence type="ECO:0007744" key="8">
    <source>
        <dbReference type="PDB" id="1L0V"/>
    </source>
</evidence>
<evidence type="ECO:0007829" key="9">
    <source>
        <dbReference type="PDB" id="1KF6"/>
    </source>
</evidence>
<keyword id="KW-0002">3D-structure</keyword>
<keyword id="KW-0997">Cell inner membrane</keyword>
<keyword id="KW-1003">Cell membrane</keyword>
<keyword id="KW-0472">Membrane</keyword>
<keyword id="KW-1185">Reference proteome</keyword>
<keyword id="KW-0812">Transmembrane</keyword>
<keyword id="KW-1133">Transmembrane helix</keyword>
<dbReference type="EMBL" id="J01611">
    <property type="protein sequence ID" value="AAA23439.1"/>
    <property type="molecule type" value="Genomic_DNA"/>
</dbReference>
<dbReference type="EMBL" id="V00277">
    <property type="protein sequence ID" value="CAA23535.1"/>
    <property type="molecule type" value="Genomic_DNA"/>
</dbReference>
<dbReference type="EMBL" id="U14003">
    <property type="protein sequence ID" value="AAA97051.1"/>
    <property type="molecule type" value="Genomic_DNA"/>
</dbReference>
<dbReference type="EMBL" id="U00096">
    <property type="protein sequence ID" value="AAC77112.1"/>
    <property type="molecule type" value="Genomic_DNA"/>
</dbReference>
<dbReference type="EMBL" id="AP009048">
    <property type="protein sequence ID" value="BAE78156.1"/>
    <property type="molecule type" value="Genomic_DNA"/>
</dbReference>
<dbReference type="PIR" id="S56380">
    <property type="entry name" value="S56380"/>
</dbReference>
<dbReference type="RefSeq" id="NP_418576.1">
    <property type="nucleotide sequence ID" value="NC_000913.3"/>
</dbReference>
<dbReference type="RefSeq" id="WP_000208757.1">
    <property type="nucleotide sequence ID" value="NZ_SSZK01000018.1"/>
</dbReference>
<dbReference type="PDB" id="1KF6">
    <property type="method" value="X-ray"/>
    <property type="resolution" value="2.70 A"/>
    <property type="chains" value="C/O=2-131"/>
</dbReference>
<dbReference type="PDB" id="1KFY">
    <property type="method" value="X-ray"/>
    <property type="resolution" value="3.60 A"/>
    <property type="chains" value="C/O=2-131"/>
</dbReference>
<dbReference type="PDB" id="1L0V">
    <property type="method" value="X-ray"/>
    <property type="resolution" value="3.30 A"/>
    <property type="chains" value="C/O=2-131"/>
</dbReference>
<dbReference type="PDB" id="2B76">
    <property type="method" value="X-ray"/>
    <property type="resolution" value="3.30 A"/>
    <property type="chains" value="C/O=2-131"/>
</dbReference>
<dbReference type="PDB" id="3CIR">
    <property type="method" value="X-ray"/>
    <property type="resolution" value="3.65 A"/>
    <property type="chains" value="C/O=2-131"/>
</dbReference>
<dbReference type="PDB" id="3P4P">
    <property type="method" value="X-ray"/>
    <property type="resolution" value="2.80 A"/>
    <property type="chains" value="C/O=2-131"/>
</dbReference>
<dbReference type="PDB" id="3P4Q">
    <property type="method" value="X-ray"/>
    <property type="resolution" value="3.35 A"/>
    <property type="chains" value="C/O=2-131"/>
</dbReference>
<dbReference type="PDB" id="3P4R">
    <property type="method" value="X-ray"/>
    <property type="resolution" value="3.05 A"/>
    <property type="chains" value="C/O=2-131"/>
</dbReference>
<dbReference type="PDB" id="3P4S">
    <property type="method" value="X-ray"/>
    <property type="resolution" value="3.10 A"/>
    <property type="chains" value="C/O=2-131"/>
</dbReference>
<dbReference type="PDB" id="5VPN">
    <property type="method" value="X-ray"/>
    <property type="resolution" value="4.22 A"/>
    <property type="chains" value="C/G=2-131"/>
</dbReference>
<dbReference type="PDB" id="6AWF">
    <property type="method" value="X-ray"/>
    <property type="resolution" value="3.35 A"/>
    <property type="chains" value="C/G=2-131"/>
</dbReference>
<dbReference type="PDBsum" id="1KF6"/>
<dbReference type="PDBsum" id="1KFY"/>
<dbReference type="PDBsum" id="1L0V"/>
<dbReference type="PDBsum" id="2B76"/>
<dbReference type="PDBsum" id="3CIR"/>
<dbReference type="PDBsum" id="3P4P"/>
<dbReference type="PDBsum" id="3P4Q"/>
<dbReference type="PDBsum" id="3P4R"/>
<dbReference type="PDBsum" id="3P4S"/>
<dbReference type="PDBsum" id="5VPN"/>
<dbReference type="PDBsum" id="6AWF"/>
<dbReference type="SMR" id="P0A8Q0"/>
<dbReference type="BioGRID" id="4262700">
    <property type="interactions" value="365"/>
</dbReference>
<dbReference type="ComplexPortal" id="CPX-1967">
    <property type="entry name" value="Plasma membrane fumarate reductase complex"/>
</dbReference>
<dbReference type="DIP" id="DIP-48082N"/>
<dbReference type="FunCoup" id="P0A8Q0">
    <property type="interactions" value="490"/>
</dbReference>
<dbReference type="IntAct" id="P0A8Q0">
    <property type="interactions" value="3"/>
</dbReference>
<dbReference type="STRING" id="511145.b4152"/>
<dbReference type="DrugBank" id="DB07490">
    <property type="generic name" value="2-[1-(4-CHLORO-PHENYL)-ETHYL]-4,6-DINITRO-PHENOL"/>
</dbReference>
<dbReference type="DrugBank" id="DB07918">
    <property type="generic name" value="2-heptyl-4-hydroxyquinoline N-oxide"/>
</dbReference>
<dbReference type="jPOST" id="P0A8Q0"/>
<dbReference type="PaxDb" id="511145-b4152"/>
<dbReference type="EnsemblBacteria" id="AAC77112">
    <property type="protein sequence ID" value="AAC77112"/>
    <property type="gene ID" value="b4152"/>
</dbReference>
<dbReference type="GeneID" id="93777670"/>
<dbReference type="GeneID" id="948680"/>
<dbReference type="KEGG" id="ecj:JW4113"/>
<dbReference type="KEGG" id="eco:b4152"/>
<dbReference type="KEGG" id="ecoc:C3026_22445"/>
<dbReference type="PATRIC" id="fig|1411691.4.peg.2546"/>
<dbReference type="EchoBASE" id="EB0328"/>
<dbReference type="eggNOG" id="COG3029">
    <property type="taxonomic scope" value="Bacteria"/>
</dbReference>
<dbReference type="HOGENOM" id="CLU_156492_0_0_6"/>
<dbReference type="InParanoid" id="P0A8Q0"/>
<dbReference type="OMA" id="MTATWWQ"/>
<dbReference type="OrthoDB" id="8909678at2"/>
<dbReference type="PhylomeDB" id="P0A8Q0"/>
<dbReference type="BioCyc" id="EcoCyc:FUM-MEMB1"/>
<dbReference type="BioCyc" id="MetaCyc:FUM-MEMB1"/>
<dbReference type="BRENDA" id="1.3.5.4">
    <property type="organism ID" value="2026"/>
</dbReference>
<dbReference type="EvolutionaryTrace" id="P0A8Q0"/>
<dbReference type="PRO" id="PR:P0A8Q0"/>
<dbReference type="Proteomes" id="UP000000625">
    <property type="component" value="Chromosome"/>
</dbReference>
<dbReference type="GO" id="GO:0045283">
    <property type="term" value="C:fumarate reductase complex"/>
    <property type="evidence" value="ECO:0000314"/>
    <property type="project" value="EcoCyc"/>
</dbReference>
<dbReference type="GO" id="GO:0016020">
    <property type="term" value="C:membrane"/>
    <property type="evidence" value="ECO:0000314"/>
    <property type="project" value="ComplexPortal"/>
</dbReference>
<dbReference type="GO" id="GO:0005886">
    <property type="term" value="C:plasma membrane"/>
    <property type="evidence" value="ECO:0000314"/>
    <property type="project" value="EcoCyc"/>
</dbReference>
<dbReference type="GO" id="GO:0000104">
    <property type="term" value="F:succinate dehydrogenase activity"/>
    <property type="evidence" value="ECO:0007669"/>
    <property type="project" value="UniProtKB-UniRule"/>
</dbReference>
<dbReference type="GO" id="GO:0019645">
    <property type="term" value="P:anaerobic electron transport chain"/>
    <property type="evidence" value="ECO:0000303"/>
    <property type="project" value="ComplexPortal"/>
</dbReference>
<dbReference type="GO" id="GO:0009061">
    <property type="term" value="P:anaerobic respiration"/>
    <property type="evidence" value="ECO:0000315"/>
    <property type="project" value="EcoCyc"/>
</dbReference>
<dbReference type="GO" id="GO:0044780">
    <property type="term" value="P:bacterial-type flagellum assembly"/>
    <property type="evidence" value="ECO:0000315"/>
    <property type="project" value="EcoCyc"/>
</dbReference>
<dbReference type="GO" id="GO:0006113">
    <property type="term" value="P:fermentation"/>
    <property type="evidence" value="ECO:0000315"/>
    <property type="project" value="EcoCyc"/>
</dbReference>
<dbReference type="CDD" id="cd00546">
    <property type="entry name" value="QFR_TypeD_subunitC"/>
    <property type="match status" value="1"/>
</dbReference>
<dbReference type="FunFam" id="1.20.1300.10:FF:000003">
    <property type="entry name" value="Fumarate reductase subunit C"/>
    <property type="match status" value="1"/>
</dbReference>
<dbReference type="Gene3D" id="1.20.1300.10">
    <property type="entry name" value="Fumarate reductase/succinate dehydrogenase, transmembrane subunit"/>
    <property type="match status" value="1"/>
</dbReference>
<dbReference type="HAMAP" id="MF_00708">
    <property type="entry name" value="Fumarate_red_C"/>
    <property type="match status" value="1"/>
</dbReference>
<dbReference type="InterPro" id="IPR003510">
    <property type="entry name" value="Fumarate_red_C"/>
</dbReference>
<dbReference type="InterPro" id="IPR034804">
    <property type="entry name" value="SQR/QFR_C/D"/>
</dbReference>
<dbReference type="NCBIfam" id="NF003445">
    <property type="entry name" value="PRK04987.1"/>
    <property type="match status" value="1"/>
</dbReference>
<dbReference type="Pfam" id="PF02300">
    <property type="entry name" value="Fumarate_red_C"/>
    <property type="match status" value="1"/>
</dbReference>
<dbReference type="PIRSF" id="PIRSF000180">
    <property type="entry name" value="FrdC"/>
    <property type="match status" value="1"/>
</dbReference>
<dbReference type="SUPFAM" id="SSF81343">
    <property type="entry name" value="Fumarate reductase respiratory complex transmembrane subunits"/>
    <property type="match status" value="1"/>
</dbReference>
<proteinExistence type="evidence at protein level"/>
<accession>P0A8Q0</accession>
<accession>P03805</accession>
<accession>Q2M6F0</accession>
<organism>
    <name type="scientific">Escherichia coli (strain K12)</name>
    <dbReference type="NCBI Taxonomy" id="83333"/>
    <lineage>
        <taxon>Bacteria</taxon>
        <taxon>Pseudomonadati</taxon>
        <taxon>Pseudomonadota</taxon>
        <taxon>Gammaproteobacteria</taxon>
        <taxon>Enterobacterales</taxon>
        <taxon>Enterobacteriaceae</taxon>
        <taxon>Escherichia</taxon>
    </lineage>
</organism>